<name>GPMA_STAA2</name>
<sequence length="228" mass="26680">MPKLILCRHGQSEWNAKNLFTGWEDVNLSEQGINEATRAGEKVRENNIAIDVAFTSLLTRALDTTHYILTESKQQWIPVYKSWRLNERHYGGLQGLNKDDARKEFGEEQVHIWRRSYDVKPPAETEEQREAYLADRRYNHLDKRMMPYSESLKDTLVRVIPFWTDHISQYLLDGQTVLVSAHGNSIRALIKYLEDVSDEDIINYEIKTGAPLVYELTDDLEVIDKYYL</sequence>
<proteinExistence type="inferred from homology"/>
<keyword id="KW-0312">Gluconeogenesis</keyword>
<keyword id="KW-0324">Glycolysis</keyword>
<keyword id="KW-0413">Isomerase</keyword>
<accession>A6U4E6</accession>
<comment type="function">
    <text evidence="1">Catalyzes the interconversion of 2-phosphoglycerate and 3-phosphoglycerate.</text>
</comment>
<comment type="catalytic activity">
    <reaction evidence="1">
        <text>(2R)-2-phosphoglycerate = (2R)-3-phosphoglycerate</text>
        <dbReference type="Rhea" id="RHEA:15901"/>
        <dbReference type="ChEBI" id="CHEBI:58272"/>
        <dbReference type="ChEBI" id="CHEBI:58289"/>
        <dbReference type="EC" id="5.4.2.11"/>
    </reaction>
</comment>
<comment type="pathway">
    <text evidence="1">Carbohydrate degradation; glycolysis; pyruvate from D-glyceraldehyde 3-phosphate: step 3/5.</text>
</comment>
<comment type="similarity">
    <text evidence="1">Belongs to the phosphoglycerate mutase family. BPG-dependent PGAM subfamily.</text>
</comment>
<feature type="chain" id="PRO_1000084331" description="2,3-bisphosphoglycerate-dependent phosphoglycerate mutase">
    <location>
        <begin position="1"/>
        <end position="228"/>
    </location>
</feature>
<feature type="active site" description="Tele-phosphohistidine intermediate" evidence="1">
    <location>
        <position position="9"/>
    </location>
</feature>
<feature type="active site" description="Proton donor/acceptor" evidence="1">
    <location>
        <position position="87"/>
    </location>
</feature>
<feature type="binding site" evidence="1">
    <location>
        <begin position="8"/>
        <end position="15"/>
    </location>
    <ligand>
        <name>substrate</name>
    </ligand>
</feature>
<feature type="binding site" evidence="1">
    <location>
        <begin position="21"/>
        <end position="22"/>
    </location>
    <ligand>
        <name>substrate</name>
    </ligand>
</feature>
<feature type="binding site" evidence="1">
    <location>
        <position position="60"/>
    </location>
    <ligand>
        <name>substrate</name>
    </ligand>
</feature>
<feature type="binding site" evidence="1">
    <location>
        <begin position="87"/>
        <end position="90"/>
    </location>
    <ligand>
        <name>substrate</name>
    </ligand>
</feature>
<feature type="binding site" evidence="1">
    <location>
        <position position="98"/>
    </location>
    <ligand>
        <name>substrate</name>
    </ligand>
</feature>
<feature type="binding site" evidence="1">
    <location>
        <begin position="114"/>
        <end position="115"/>
    </location>
    <ligand>
        <name>substrate</name>
    </ligand>
</feature>
<feature type="binding site" evidence="1">
    <location>
        <begin position="183"/>
        <end position="184"/>
    </location>
    <ligand>
        <name>substrate</name>
    </ligand>
</feature>
<feature type="site" description="Transition state stabilizer" evidence="1">
    <location>
        <position position="182"/>
    </location>
</feature>
<organism>
    <name type="scientific">Staphylococcus aureus (strain JH1)</name>
    <dbReference type="NCBI Taxonomy" id="359787"/>
    <lineage>
        <taxon>Bacteria</taxon>
        <taxon>Bacillati</taxon>
        <taxon>Bacillota</taxon>
        <taxon>Bacilli</taxon>
        <taxon>Bacillales</taxon>
        <taxon>Staphylococcaceae</taxon>
        <taxon>Staphylococcus</taxon>
    </lineage>
</organism>
<protein>
    <recommendedName>
        <fullName evidence="1">2,3-bisphosphoglycerate-dependent phosphoglycerate mutase</fullName>
        <shortName evidence="1">BPG-dependent PGAM</shortName>
        <shortName evidence="1">PGAM</shortName>
        <shortName evidence="1">Phosphoglyceromutase</shortName>
        <shortName evidence="1">dPGM</shortName>
        <ecNumber evidence="1">5.4.2.11</ecNumber>
    </recommendedName>
</protein>
<dbReference type="EC" id="5.4.2.11" evidence="1"/>
<dbReference type="EMBL" id="CP000736">
    <property type="protein sequence ID" value="ABR53314.1"/>
    <property type="molecule type" value="Genomic_DNA"/>
</dbReference>
<dbReference type="SMR" id="A6U4E6"/>
<dbReference type="KEGG" id="sah:SaurJH1_2490"/>
<dbReference type="HOGENOM" id="CLU_033323_1_5_9"/>
<dbReference type="UniPathway" id="UPA00109">
    <property type="reaction ID" value="UER00186"/>
</dbReference>
<dbReference type="GO" id="GO:0004619">
    <property type="term" value="F:phosphoglycerate mutase activity"/>
    <property type="evidence" value="ECO:0007669"/>
    <property type="project" value="UniProtKB-EC"/>
</dbReference>
<dbReference type="GO" id="GO:0006094">
    <property type="term" value="P:gluconeogenesis"/>
    <property type="evidence" value="ECO:0007669"/>
    <property type="project" value="UniProtKB-UniRule"/>
</dbReference>
<dbReference type="GO" id="GO:0006096">
    <property type="term" value="P:glycolytic process"/>
    <property type="evidence" value="ECO:0007669"/>
    <property type="project" value="UniProtKB-UniRule"/>
</dbReference>
<dbReference type="CDD" id="cd07067">
    <property type="entry name" value="HP_PGM_like"/>
    <property type="match status" value="1"/>
</dbReference>
<dbReference type="FunFam" id="3.40.50.1240:FF:000003">
    <property type="entry name" value="2,3-bisphosphoglycerate-dependent phosphoglycerate mutase"/>
    <property type="match status" value="1"/>
</dbReference>
<dbReference type="Gene3D" id="3.40.50.1240">
    <property type="entry name" value="Phosphoglycerate mutase-like"/>
    <property type="match status" value="1"/>
</dbReference>
<dbReference type="HAMAP" id="MF_01039">
    <property type="entry name" value="PGAM_GpmA"/>
    <property type="match status" value="1"/>
</dbReference>
<dbReference type="InterPro" id="IPR013078">
    <property type="entry name" value="His_Pase_superF_clade-1"/>
</dbReference>
<dbReference type="InterPro" id="IPR029033">
    <property type="entry name" value="His_PPase_superfam"/>
</dbReference>
<dbReference type="InterPro" id="IPR001345">
    <property type="entry name" value="PG/BPGM_mutase_AS"/>
</dbReference>
<dbReference type="InterPro" id="IPR005952">
    <property type="entry name" value="Phosphogly_mut1"/>
</dbReference>
<dbReference type="NCBIfam" id="TIGR01258">
    <property type="entry name" value="pgm_1"/>
    <property type="match status" value="1"/>
</dbReference>
<dbReference type="NCBIfam" id="NF010713">
    <property type="entry name" value="PRK14115.1"/>
    <property type="match status" value="1"/>
</dbReference>
<dbReference type="NCBIfam" id="NF010717">
    <property type="entry name" value="PRK14119.1"/>
    <property type="match status" value="1"/>
</dbReference>
<dbReference type="PANTHER" id="PTHR11931">
    <property type="entry name" value="PHOSPHOGLYCERATE MUTASE"/>
    <property type="match status" value="1"/>
</dbReference>
<dbReference type="Pfam" id="PF00300">
    <property type="entry name" value="His_Phos_1"/>
    <property type="match status" value="1"/>
</dbReference>
<dbReference type="PIRSF" id="PIRSF000709">
    <property type="entry name" value="6PFK_2-Ptase"/>
    <property type="match status" value="1"/>
</dbReference>
<dbReference type="SMART" id="SM00855">
    <property type="entry name" value="PGAM"/>
    <property type="match status" value="1"/>
</dbReference>
<dbReference type="SUPFAM" id="SSF53254">
    <property type="entry name" value="Phosphoglycerate mutase-like"/>
    <property type="match status" value="1"/>
</dbReference>
<dbReference type="PROSITE" id="PS00175">
    <property type="entry name" value="PG_MUTASE"/>
    <property type="match status" value="1"/>
</dbReference>
<reference key="1">
    <citation type="submission" date="2007-06" db="EMBL/GenBank/DDBJ databases">
        <title>Complete sequence of chromosome of Staphylococcus aureus subsp. aureus JH1.</title>
        <authorList>
            <consortium name="US DOE Joint Genome Institute"/>
            <person name="Copeland A."/>
            <person name="Lucas S."/>
            <person name="Lapidus A."/>
            <person name="Barry K."/>
            <person name="Detter J.C."/>
            <person name="Glavina del Rio T."/>
            <person name="Hammon N."/>
            <person name="Israni S."/>
            <person name="Dalin E."/>
            <person name="Tice H."/>
            <person name="Pitluck S."/>
            <person name="Chain P."/>
            <person name="Malfatti S."/>
            <person name="Shin M."/>
            <person name="Vergez L."/>
            <person name="Schmutz J."/>
            <person name="Larimer F."/>
            <person name="Land M."/>
            <person name="Hauser L."/>
            <person name="Kyrpides N."/>
            <person name="Ivanova N."/>
            <person name="Tomasz A."/>
            <person name="Richardson P."/>
        </authorList>
    </citation>
    <scope>NUCLEOTIDE SEQUENCE [LARGE SCALE GENOMIC DNA]</scope>
    <source>
        <strain>JH1</strain>
    </source>
</reference>
<evidence type="ECO:0000255" key="1">
    <source>
        <dbReference type="HAMAP-Rule" id="MF_01039"/>
    </source>
</evidence>
<gene>
    <name evidence="1" type="primary">gpmA</name>
    <name type="ordered locus">SaurJH1_2490</name>
</gene>